<organism>
    <name type="scientific">Sulfolobus acidocaldarius (strain ATCC 33909 / DSM 639 / JCM 8929 / NBRC 15157 / NCIMB 11770)</name>
    <dbReference type="NCBI Taxonomy" id="330779"/>
    <lineage>
        <taxon>Archaea</taxon>
        <taxon>Thermoproteota</taxon>
        <taxon>Thermoprotei</taxon>
        <taxon>Sulfolobales</taxon>
        <taxon>Sulfolobaceae</taxon>
        <taxon>Sulfolobus</taxon>
    </lineage>
</organism>
<keyword id="KW-0002">3D-structure</keyword>
<keyword id="KW-1185">Reference proteome</keyword>
<keyword id="KW-0687">Ribonucleoprotein</keyword>
<keyword id="KW-0689">Ribosomal protein</keyword>
<keyword id="KW-0694">RNA-binding</keyword>
<keyword id="KW-0699">rRNA-binding</keyword>
<gene>
    <name evidence="1" type="primary">rpl4</name>
    <name type="ordered locus">Saci_0596</name>
</gene>
<comment type="function">
    <text evidence="1">One of the primary rRNA binding proteins, this protein initially binds near the 5'-end of the 23S rRNA. It is important during the early stages of 50S assembly. It makes multiple contacts with different domains of the 23S rRNA in the assembled 50S subunit and ribosome.</text>
</comment>
<comment type="function">
    <text evidence="1">Forms part of the polypeptide exit tunnel.</text>
</comment>
<comment type="subunit">
    <text evidence="1">Part of the 50S ribosomal subunit.</text>
</comment>
<comment type="similarity">
    <text evidence="1">Belongs to the universal ribosomal protein uL4 family.</text>
</comment>
<sequence>MYIELQTKKVSVLDLKGNQLEEIELPLFFSYPVRKDLIRRVFLSEFTKSLQPKGRDPLAGKRTSALSFGINLGIARVPRVKGSGEAALAPNTVGGRLAFPPTTEKRLVEEVNLKEKKLGIISALAATADPNFVKARGHRFTSNNVPIILVDDFENISKAKEIMDILKSIGVVDDIKRVKESKGVRAGKGKMRGRRYQIAKGPLIVVSNHKSPVVESASNIPGVNVVSANLVSVIHLAPGGHPGRLTIYTKSSINILRQRFEGRLNL</sequence>
<feature type="chain" id="PRO_0000129343" description="Large ribosomal subunit protein uL4">
    <location>
        <begin position="1"/>
        <end position="266"/>
    </location>
</feature>
<evidence type="ECO:0000255" key="1">
    <source>
        <dbReference type="HAMAP-Rule" id="MF_01328"/>
    </source>
</evidence>
<evidence type="ECO:0000305" key="2"/>
<protein>
    <recommendedName>
        <fullName evidence="1">Large ribosomal subunit protein uL4</fullName>
    </recommendedName>
    <alternativeName>
        <fullName evidence="2">50S ribosomal protein L4</fullName>
    </alternativeName>
</protein>
<proteinExistence type="evidence at protein level"/>
<accession>Q4JB41</accession>
<reference key="1">
    <citation type="journal article" date="2005" name="J. Bacteriol.">
        <title>The genome of Sulfolobus acidocaldarius, a model organism of the Crenarchaeota.</title>
        <authorList>
            <person name="Chen L."/>
            <person name="Bruegger K."/>
            <person name="Skovgaard M."/>
            <person name="Redder P."/>
            <person name="She Q."/>
            <person name="Torarinsson E."/>
            <person name="Greve B."/>
            <person name="Awayez M."/>
            <person name="Zibat A."/>
            <person name="Klenk H.-P."/>
            <person name="Garrett R.A."/>
        </authorList>
    </citation>
    <scope>NUCLEOTIDE SEQUENCE [LARGE SCALE GENOMIC DNA]</scope>
    <source>
        <strain>ATCC 33909 / DSM 639 / JCM 8929 / NBRC 15157 / NCIMB 11770</strain>
    </source>
</reference>
<name>RL4_SULAC</name>
<dbReference type="EMBL" id="CP000077">
    <property type="protein sequence ID" value="AAY79988.1"/>
    <property type="molecule type" value="Genomic_DNA"/>
</dbReference>
<dbReference type="RefSeq" id="WP_011277490.1">
    <property type="nucleotide sequence ID" value="NC_007181.1"/>
</dbReference>
<dbReference type="PDB" id="8HKU">
    <property type="method" value="EM"/>
    <property type="resolution" value="2.72 A"/>
    <property type="chains" value="AL4P=9-259"/>
</dbReference>
<dbReference type="PDB" id="8HKV">
    <property type="method" value="EM"/>
    <property type="resolution" value="4.94 A"/>
    <property type="chains" value="AL4P=9-259"/>
</dbReference>
<dbReference type="PDB" id="8HKY">
    <property type="method" value="EM"/>
    <property type="resolution" value="4.45 A"/>
    <property type="chains" value="AL4P=9-259"/>
</dbReference>
<dbReference type="PDB" id="8HKZ">
    <property type="method" value="EM"/>
    <property type="resolution" value="4.78 A"/>
    <property type="chains" value="AL4P=9-259"/>
</dbReference>
<dbReference type="PDB" id="8HL1">
    <property type="method" value="EM"/>
    <property type="resolution" value="3.93 A"/>
    <property type="chains" value="AL4P=9-259"/>
</dbReference>
<dbReference type="PDB" id="8HL2">
    <property type="method" value="EM"/>
    <property type="resolution" value="4.10 A"/>
    <property type="chains" value="AL4P=9-259"/>
</dbReference>
<dbReference type="PDB" id="8HL3">
    <property type="method" value="EM"/>
    <property type="resolution" value="4.80 A"/>
    <property type="chains" value="AL4P=9-259"/>
</dbReference>
<dbReference type="PDB" id="8HL4">
    <property type="method" value="EM"/>
    <property type="resolution" value="4.62 A"/>
    <property type="chains" value="AL4P=9-259"/>
</dbReference>
<dbReference type="PDB" id="8HL5">
    <property type="method" value="EM"/>
    <property type="resolution" value="5.72 A"/>
    <property type="chains" value="AL4P=9-259"/>
</dbReference>
<dbReference type="PDBsum" id="8HKU"/>
<dbReference type="PDBsum" id="8HKV"/>
<dbReference type="PDBsum" id="8HKY"/>
<dbReference type="PDBsum" id="8HKZ"/>
<dbReference type="PDBsum" id="8HL1"/>
<dbReference type="PDBsum" id="8HL2"/>
<dbReference type="PDBsum" id="8HL3"/>
<dbReference type="PDBsum" id="8HL4"/>
<dbReference type="PDBsum" id="8HL5"/>
<dbReference type="EMDB" id="EMD-34860"/>
<dbReference type="EMDB" id="EMD-34861"/>
<dbReference type="EMDB" id="EMD-34863"/>
<dbReference type="EMDB" id="EMD-34864"/>
<dbReference type="EMDB" id="EMD-34866"/>
<dbReference type="EMDB" id="EMD-34867"/>
<dbReference type="EMDB" id="EMD-34868"/>
<dbReference type="EMDB" id="EMD-34869"/>
<dbReference type="EMDB" id="EMD-34870"/>
<dbReference type="SMR" id="Q4JB41"/>
<dbReference type="STRING" id="330779.Saci_0596"/>
<dbReference type="GeneID" id="14551117"/>
<dbReference type="KEGG" id="sai:Saci_0596"/>
<dbReference type="PATRIC" id="fig|330779.12.peg.575"/>
<dbReference type="eggNOG" id="arCOG04071">
    <property type="taxonomic scope" value="Archaea"/>
</dbReference>
<dbReference type="HOGENOM" id="CLU_026535_0_0_2"/>
<dbReference type="Proteomes" id="UP000001018">
    <property type="component" value="Chromosome"/>
</dbReference>
<dbReference type="GO" id="GO:1990904">
    <property type="term" value="C:ribonucleoprotein complex"/>
    <property type="evidence" value="ECO:0007669"/>
    <property type="project" value="UniProtKB-KW"/>
</dbReference>
<dbReference type="GO" id="GO:0005840">
    <property type="term" value="C:ribosome"/>
    <property type="evidence" value="ECO:0007669"/>
    <property type="project" value="UniProtKB-KW"/>
</dbReference>
<dbReference type="GO" id="GO:0019843">
    <property type="term" value="F:rRNA binding"/>
    <property type="evidence" value="ECO:0007669"/>
    <property type="project" value="UniProtKB-UniRule"/>
</dbReference>
<dbReference type="GO" id="GO:0003735">
    <property type="term" value="F:structural constituent of ribosome"/>
    <property type="evidence" value="ECO:0007669"/>
    <property type="project" value="InterPro"/>
</dbReference>
<dbReference type="GO" id="GO:0006412">
    <property type="term" value="P:translation"/>
    <property type="evidence" value="ECO:0007669"/>
    <property type="project" value="UniProtKB-UniRule"/>
</dbReference>
<dbReference type="Gene3D" id="3.40.1370.10">
    <property type="match status" value="1"/>
</dbReference>
<dbReference type="HAMAP" id="MF_01328_A">
    <property type="entry name" value="Ribosomal_uL4_A"/>
    <property type="match status" value="1"/>
</dbReference>
<dbReference type="InterPro" id="IPR002136">
    <property type="entry name" value="Ribosomal_uL4"/>
</dbReference>
<dbReference type="InterPro" id="IPR023574">
    <property type="entry name" value="Ribosomal_uL4_dom_sf"/>
</dbReference>
<dbReference type="InterPro" id="IPR045240">
    <property type="entry name" value="Ribosomal_uL4_euk/arch"/>
</dbReference>
<dbReference type="InterPro" id="IPR019970">
    <property type="entry name" value="Ribosomall_uL4-arc"/>
</dbReference>
<dbReference type="NCBIfam" id="TIGR03672">
    <property type="entry name" value="rpl4p_arch"/>
    <property type="match status" value="1"/>
</dbReference>
<dbReference type="PANTHER" id="PTHR19431">
    <property type="entry name" value="60S RIBOSOMAL PROTEIN L4"/>
    <property type="match status" value="1"/>
</dbReference>
<dbReference type="Pfam" id="PF00573">
    <property type="entry name" value="Ribosomal_L4"/>
    <property type="match status" value="1"/>
</dbReference>
<dbReference type="SUPFAM" id="SSF52166">
    <property type="entry name" value="Ribosomal protein L4"/>
    <property type="match status" value="1"/>
</dbReference>